<evidence type="ECO:0000255" key="1">
    <source>
        <dbReference type="HAMAP-Rule" id="MF_00194"/>
    </source>
</evidence>
<proteinExistence type="inferred from homology"/>
<organism>
    <name type="scientific">Colwellia psychrerythraea (strain 34H / ATCC BAA-681)</name>
    <name type="common">Vibrio psychroerythus</name>
    <dbReference type="NCBI Taxonomy" id="167879"/>
    <lineage>
        <taxon>Bacteria</taxon>
        <taxon>Pseudomonadati</taxon>
        <taxon>Pseudomonadota</taxon>
        <taxon>Gammaproteobacteria</taxon>
        <taxon>Alteromonadales</taxon>
        <taxon>Colwelliaceae</taxon>
        <taxon>Colwellia</taxon>
    </lineage>
</organism>
<gene>
    <name evidence="1" type="primary">rdgC</name>
    <name type="ordered locus">CPS_1204</name>
</gene>
<comment type="function">
    <text evidence="1">May be involved in recombination.</text>
</comment>
<comment type="subcellular location">
    <subcellularLocation>
        <location evidence="1">Cytoplasm</location>
        <location evidence="1">Nucleoid</location>
    </subcellularLocation>
</comment>
<comment type="similarity">
    <text evidence="1">Belongs to the RdgC family.</text>
</comment>
<accession>Q486R8</accession>
<protein>
    <recommendedName>
        <fullName evidence="1">Recombination-associated protein RdgC</fullName>
    </recommendedName>
</protein>
<feature type="chain" id="PRO_1000021205" description="Recombination-associated protein RdgC">
    <location>
        <begin position="1"/>
        <end position="307"/>
    </location>
</feature>
<sequence length="307" mass="34813">MWFKNLYFFAFTRPFEWSEQDLEKHLSEHLFTPLGSTEISHFGWINALGKHGDTSVHSANGNFLICARKEEKMLPASVIKDMIEEKVNLLEQEQGRGATKKEKEQFKEDITFELLPRAFSRITDTHAYISPVNNIIVINSSSRGKAEDLLALLRKVLGTLPVSSLEPDVCADETMTDWLNEKSLGGKFTLGMEAEFNALGDDGAVVRVKNQDLLSEEIKSHLDADKYVVKVALEWDESLSFILCDDLAIKRVKFFDVIHEQNDDIDSDDVIAKLDADFALMSGELNRFIIELLAEFSMKTTDLLEKD</sequence>
<dbReference type="EMBL" id="CP000083">
    <property type="protein sequence ID" value="AAZ28249.1"/>
    <property type="molecule type" value="Genomic_DNA"/>
</dbReference>
<dbReference type="RefSeq" id="WP_011042041.1">
    <property type="nucleotide sequence ID" value="NC_003910.7"/>
</dbReference>
<dbReference type="SMR" id="Q486R8"/>
<dbReference type="STRING" id="167879.CPS_1204"/>
<dbReference type="KEGG" id="cps:CPS_1204"/>
<dbReference type="eggNOG" id="COG2974">
    <property type="taxonomic scope" value="Bacteria"/>
</dbReference>
<dbReference type="HOGENOM" id="CLU_052038_1_1_6"/>
<dbReference type="Proteomes" id="UP000000547">
    <property type="component" value="Chromosome"/>
</dbReference>
<dbReference type="GO" id="GO:0043590">
    <property type="term" value="C:bacterial nucleoid"/>
    <property type="evidence" value="ECO:0007669"/>
    <property type="project" value="TreeGrafter"/>
</dbReference>
<dbReference type="GO" id="GO:0005737">
    <property type="term" value="C:cytoplasm"/>
    <property type="evidence" value="ECO:0007669"/>
    <property type="project" value="UniProtKB-UniRule"/>
</dbReference>
<dbReference type="GO" id="GO:0003690">
    <property type="term" value="F:double-stranded DNA binding"/>
    <property type="evidence" value="ECO:0007669"/>
    <property type="project" value="TreeGrafter"/>
</dbReference>
<dbReference type="GO" id="GO:0006310">
    <property type="term" value="P:DNA recombination"/>
    <property type="evidence" value="ECO:0007669"/>
    <property type="project" value="UniProtKB-UniRule"/>
</dbReference>
<dbReference type="GO" id="GO:0000018">
    <property type="term" value="P:regulation of DNA recombination"/>
    <property type="evidence" value="ECO:0007669"/>
    <property type="project" value="TreeGrafter"/>
</dbReference>
<dbReference type="HAMAP" id="MF_00194">
    <property type="entry name" value="RdgC"/>
    <property type="match status" value="1"/>
</dbReference>
<dbReference type="InterPro" id="IPR007476">
    <property type="entry name" value="RdgC"/>
</dbReference>
<dbReference type="NCBIfam" id="NF001462">
    <property type="entry name" value="PRK00321.1-3"/>
    <property type="match status" value="1"/>
</dbReference>
<dbReference type="NCBIfam" id="NF001464">
    <property type="entry name" value="PRK00321.1-5"/>
    <property type="match status" value="1"/>
</dbReference>
<dbReference type="PANTHER" id="PTHR38103">
    <property type="entry name" value="RECOMBINATION-ASSOCIATED PROTEIN RDGC"/>
    <property type="match status" value="1"/>
</dbReference>
<dbReference type="PANTHER" id="PTHR38103:SF1">
    <property type="entry name" value="RECOMBINATION-ASSOCIATED PROTEIN RDGC"/>
    <property type="match status" value="1"/>
</dbReference>
<dbReference type="Pfam" id="PF04381">
    <property type="entry name" value="RdgC"/>
    <property type="match status" value="1"/>
</dbReference>
<name>RDGC_COLP3</name>
<keyword id="KW-0963">Cytoplasm</keyword>
<keyword id="KW-0233">DNA recombination</keyword>
<reference key="1">
    <citation type="journal article" date="2005" name="Proc. Natl. Acad. Sci. U.S.A.">
        <title>The psychrophilic lifestyle as revealed by the genome sequence of Colwellia psychrerythraea 34H through genomic and proteomic analyses.</title>
        <authorList>
            <person name="Methe B.A."/>
            <person name="Nelson K.E."/>
            <person name="Deming J.W."/>
            <person name="Momen B."/>
            <person name="Melamud E."/>
            <person name="Zhang X."/>
            <person name="Moult J."/>
            <person name="Madupu R."/>
            <person name="Nelson W.C."/>
            <person name="Dodson R.J."/>
            <person name="Brinkac L.M."/>
            <person name="Daugherty S.C."/>
            <person name="Durkin A.S."/>
            <person name="DeBoy R.T."/>
            <person name="Kolonay J.F."/>
            <person name="Sullivan S.A."/>
            <person name="Zhou L."/>
            <person name="Davidsen T.M."/>
            <person name="Wu M."/>
            <person name="Huston A.L."/>
            <person name="Lewis M."/>
            <person name="Weaver B."/>
            <person name="Weidman J.F."/>
            <person name="Khouri H."/>
            <person name="Utterback T.R."/>
            <person name="Feldblyum T.V."/>
            <person name="Fraser C.M."/>
        </authorList>
    </citation>
    <scope>NUCLEOTIDE SEQUENCE [LARGE SCALE GENOMIC DNA]</scope>
    <source>
        <strain>34H / ATCC BAA-681</strain>
    </source>
</reference>